<organism>
    <name type="scientific">Brucella melitensis biotype 1 (strain ATCC 23456 / CCUG 17765 / NCTC 10094 / 16M)</name>
    <dbReference type="NCBI Taxonomy" id="224914"/>
    <lineage>
        <taxon>Bacteria</taxon>
        <taxon>Pseudomonadati</taxon>
        <taxon>Pseudomonadota</taxon>
        <taxon>Alphaproteobacteria</taxon>
        <taxon>Hyphomicrobiales</taxon>
        <taxon>Brucellaceae</taxon>
        <taxon>Brucella/Ochrobactrum group</taxon>
        <taxon>Brucella</taxon>
    </lineage>
</organism>
<name>CH10_BRUME</name>
<reference key="1">
    <citation type="journal article" date="2002" name="Proc. Natl. Acad. Sci. U.S.A.">
        <title>The genome sequence of the facultative intracellular pathogen Brucella melitensis.</title>
        <authorList>
            <person name="DelVecchio V.G."/>
            <person name="Kapatral V."/>
            <person name="Redkar R.J."/>
            <person name="Patra G."/>
            <person name="Mujer C."/>
            <person name="Los T."/>
            <person name="Ivanova N."/>
            <person name="Anderson I."/>
            <person name="Bhattacharyya A."/>
            <person name="Lykidis A."/>
            <person name="Reznik G."/>
            <person name="Jablonski L."/>
            <person name="Larsen N."/>
            <person name="D'Souza M."/>
            <person name="Bernal A."/>
            <person name="Mazur M."/>
            <person name="Goltsman E."/>
            <person name="Selkov E."/>
            <person name="Elzer P.H."/>
            <person name="Hagius S."/>
            <person name="O'Callaghan D."/>
            <person name="Letesson J.-J."/>
            <person name="Haselkorn R."/>
            <person name="Kyrpides N.C."/>
            <person name="Overbeek R."/>
        </authorList>
    </citation>
    <scope>NUCLEOTIDE SEQUENCE [LARGE SCALE GENOMIC DNA]</scope>
    <source>
        <strain>ATCC 23456 / CCUG 17765 / NCTC 10094 / 16M</strain>
    </source>
</reference>
<feature type="chain" id="PRO_0000174710" description="Co-chaperonin GroES">
    <location>
        <begin position="1"/>
        <end position="98"/>
    </location>
</feature>
<gene>
    <name evidence="1" type="primary">groES</name>
    <name evidence="1" type="synonym">groS</name>
    <name type="ordered locus">BMEII1047</name>
</gene>
<dbReference type="EMBL" id="AE008918">
    <property type="protein sequence ID" value="AAL54289.1"/>
    <property type="molecule type" value="Genomic_DNA"/>
</dbReference>
<dbReference type="PIR" id="AF3640">
    <property type="entry name" value="AF3640"/>
</dbReference>
<dbReference type="RefSeq" id="WP_002966386.1">
    <property type="nucleotide sequence ID" value="NZ_GG703779.1"/>
</dbReference>
<dbReference type="SMR" id="P0A342"/>
<dbReference type="GeneID" id="97535613"/>
<dbReference type="KEGG" id="bme:BMEII1047"/>
<dbReference type="KEGG" id="bmel:DK63_2210"/>
<dbReference type="PATRIC" id="fig|224914.52.peg.2315"/>
<dbReference type="eggNOG" id="COG0234">
    <property type="taxonomic scope" value="Bacteria"/>
</dbReference>
<dbReference type="Proteomes" id="UP000000419">
    <property type="component" value="Chromosome II"/>
</dbReference>
<dbReference type="GO" id="GO:0005737">
    <property type="term" value="C:cytoplasm"/>
    <property type="evidence" value="ECO:0007669"/>
    <property type="project" value="UniProtKB-SubCell"/>
</dbReference>
<dbReference type="GO" id="GO:0005524">
    <property type="term" value="F:ATP binding"/>
    <property type="evidence" value="ECO:0007669"/>
    <property type="project" value="InterPro"/>
</dbReference>
<dbReference type="GO" id="GO:0046872">
    <property type="term" value="F:metal ion binding"/>
    <property type="evidence" value="ECO:0007669"/>
    <property type="project" value="TreeGrafter"/>
</dbReference>
<dbReference type="GO" id="GO:0044183">
    <property type="term" value="F:protein folding chaperone"/>
    <property type="evidence" value="ECO:0007669"/>
    <property type="project" value="InterPro"/>
</dbReference>
<dbReference type="GO" id="GO:0051087">
    <property type="term" value="F:protein-folding chaperone binding"/>
    <property type="evidence" value="ECO:0007669"/>
    <property type="project" value="TreeGrafter"/>
</dbReference>
<dbReference type="GO" id="GO:0051082">
    <property type="term" value="F:unfolded protein binding"/>
    <property type="evidence" value="ECO:0007669"/>
    <property type="project" value="TreeGrafter"/>
</dbReference>
<dbReference type="GO" id="GO:0051085">
    <property type="term" value="P:chaperone cofactor-dependent protein refolding"/>
    <property type="evidence" value="ECO:0007669"/>
    <property type="project" value="TreeGrafter"/>
</dbReference>
<dbReference type="CDD" id="cd00320">
    <property type="entry name" value="cpn10"/>
    <property type="match status" value="1"/>
</dbReference>
<dbReference type="FunFam" id="2.30.33.40:FF:000001">
    <property type="entry name" value="10 kDa chaperonin"/>
    <property type="match status" value="1"/>
</dbReference>
<dbReference type="Gene3D" id="2.30.33.40">
    <property type="entry name" value="GroES chaperonin"/>
    <property type="match status" value="1"/>
</dbReference>
<dbReference type="HAMAP" id="MF_00580">
    <property type="entry name" value="CH10"/>
    <property type="match status" value="1"/>
</dbReference>
<dbReference type="InterPro" id="IPR020818">
    <property type="entry name" value="Chaperonin_GroES"/>
</dbReference>
<dbReference type="InterPro" id="IPR037124">
    <property type="entry name" value="Chaperonin_GroES_sf"/>
</dbReference>
<dbReference type="InterPro" id="IPR018369">
    <property type="entry name" value="Chaprnonin_Cpn10_CS"/>
</dbReference>
<dbReference type="InterPro" id="IPR011032">
    <property type="entry name" value="GroES-like_sf"/>
</dbReference>
<dbReference type="NCBIfam" id="NF001527">
    <property type="entry name" value="PRK00364.1-2"/>
    <property type="match status" value="1"/>
</dbReference>
<dbReference type="NCBIfam" id="NF001529">
    <property type="entry name" value="PRK00364.1-5"/>
    <property type="match status" value="1"/>
</dbReference>
<dbReference type="NCBIfam" id="NF001531">
    <property type="entry name" value="PRK00364.2-2"/>
    <property type="match status" value="1"/>
</dbReference>
<dbReference type="NCBIfam" id="NF001533">
    <property type="entry name" value="PRK00364.2-4"/>
    <property type="match status" value="1"/>
</dbReference>
<dbReference type="NCBIfam" id="NF001534">
    <property type="entry name" value="PRK00364.2-5"/>
    <property type="match status" value="1"/>
</dbReference>
<dbReference type="PANTHER" id="PTHR10772">
    <property type="entry name" value="10 KDA HEAT SHOCK PROTEIN"/>
    <property type="match status" value="1"/>
</dbReference>
<dbReference type="PANTHER" id="PTHR10772:SF58">
    <property type="entry name" value="CO-CHAPERONIN GROES"/>
    <property type="match status" value="1"/>
</dbReference>
<dbReference type="Pfam" id="PF00166">
    <property type="entry name" value="Cpn10"/>
    <property type="match status" value="1"/>
</dbReference>
<dbReference type="PRINTS" id="PR00297">
    <property type="entry name" value="CHAPERONIN10"/>
</dbReference>
<dbReference type="SMART" id="SM00883">
    <property type="entry name" value="Cpn10"/>
    <property type="match status" value="1"/>
</dbReference>
<dbReference type="SUPFAM" id="SSF50129">
    <property type="entry name" value="GroES-like"/>
    <property type="match status" value="1"/>
</dbReference>
<dbReference type="PROSITE" id="PS00681">
    <property type="entry name" value="CHAPERONINS_CPN10"/>
    <property type="match status" value="1"/>
</dbReference>
<accession>P0A342</accession>
<accession>P25968</accession>
<sequence length="98" mass="10393">MADIKFRPLHDRVVVRRVESEAKTAGGIIIPDTAKEKPQEGEVVAAGAGARDEAGKLVPLDVKAGDRVLFGKWSGTEVKIGGEDLLIMKESDILGIVG</sequence>
<evidence type="ECO:0000255" key="1">
    <source>
        <dbReference type="HAMAP-Rule" id="MF_00580"/>
    </source>
</evidence>
<evidence type="ECO:0000305" key="2"/>
<keyword id="KW-0143">Chaperone</keyword>
<keyword id="KW-0963">Cytoplasm</keyword>
<keyword id="KW-0346">Stress response</keyword>
<comment type="function">
    <text evidence="1">Together with the chaperonin GroEL, plays an essential role in assisting protein folding. The GroEL-GroES system forms a nano-cage that allows encapsulation of the non-native substrate proteins and provides a physical environment optimized to promote and accelerate protein folding. GroES binds to the apical surface of the GroEL ring, thereby capping the opening of the GroEL channel.</text>
</comment>
<comment type="subunit">
    <text evidence="1">Heptamer of 7 subunits arranged in a ring. Interacts with the chaperonin GroEL.</text>
</comment>
<comment type="subcellular location">
    <subcellularLocation>
        <location evidence="1">Cytoplasm</location>
    </subcellularLocation>
</comment>
<comment type="induction">
    <text>By heat shock.</text>
</comment>
<comment type="similarity">
    <text evidence="1 2">Belongs to the GroES chaperonin family.</text>
</comment>
<proteinExistence type="evidence at transcript level"/>
<protein>
    <recommendedName>
        <fullName evidence="1">Co-chaperonin GroES</fullName>
    </recommendedName>
    <alternativeName>
        <fullName evidence="1">10 kDa chaperonin</fullName>
    </alternativeName>
    <alternativeName>
        <fullName evidence="1">Chaperonin-10</fullName>
        <shortName evidence="1">Cpn10</shortName>
    </alternativeName>
</protein>